<feature type="chain" id="PRO_1000019743" description="Serine--tRNA ligase">
    <location>
        <begin position="1"/>
        <end position="419"/>
    </location>
</feature>
<feature type="region of interest" description="Disordered" evidence="2">
    <location>
        <begin position="45"/>
        <end position="66"/>
    </location>
</feature>
<feature type="binding site" evidence="1">
    <location>
        <begin position="226"/>
        <end position="228"/>
    </location>
    <ligand>
        <name>L-serine</name>
        <dbReference type="ChEBI" id="CHEBI:33384"/>
    </ligand>
</feature>
<feature type="binding site" evidence="1">
    <location>
        <begin position="257"/>
        <end position="259"/>
    </location>
    <ligand>
        <name>ATP</name>
        <dbReference type="ChEBI" id="CHEBI:30616"/>
    </ligand>
</feature>
<feature type="binding site" evidence="1">
    <location>
        <position position="273"/>
    </location>
    <ligand>
        <name>ATP</name>
        <dbReference type="ChEBI" id="CHEBI:30616"/>
    </ligand>
</feature>
<feature type="binding site" evidence="1">
    <location>
        <position position="280"/>
    </location>
    <ligand>
        <name>L-serine</name>
        <dbReference type="ChEBI" id="CHEBI:33384"/>
    </ligand>
</feature>
<feature type="binding site" evidence="1">
    <location>
        <begin position="344"/>
        <end position="347"/>
    </location>
    <ligand>
        <name>ATP</name>
        <dbReference type="ChEBI" id="CHEBI:30616"/>
    </ligand>
</feature>
<feature type="binding site" evidence="1">
    <location>
        <position position="379"/>
    </location>
    <ligand>
        <name>L-serine</name>
        <dbReference type="ChEBI" id="CHEBI:33384"/>
    </ligand>
</feature>
<dbReference type="EC" id="6.1.1.11" evidence="1"/>
<dbReference type="EMBL" id="CP000325">
    <property type="protein sequence ID" value="ABL06882.1"/>
    <property type="molecule type" value="Genomic_DNA"/>
</dbReference>
<dbReference type="RefSeq" id="WP_011742473.1">
    <property type="nucleotide sequence ID" value="NC_008611.1"/>
</dbReference>
<dbReference type="SMR" id="A0PX13"/>
<dbReference type="KEGG" id="mul:MUL_5006"/>
<dbReference type="eggNOG" id="COG0172">
    <property type="taxonomic scope" value="Bacteria"/>
</dbReference>
<dbReference type="HOGENOM" id="CLU_023797_0_1_11"/>
<dbReference type="UniPathway" id="UPA00906">
    <property type="reaction ID" value="UER00895"/>
</dbReference>
<dbReference type="Proteomes" id="UP000000765">
    <property type="component" value="Chromosome"/>
</dbReference>
<dbReference type="GO" id="GO:0005737">
    <property type="term" value="C:cytoplasm"/>
    <property type="evidence" value="ECO:0007669"/>
    <property type="project" value="UniProtKB-SubCell"/>
</dbReference>
<dbReference type="GO" id="GO:0005524">
    <property type="term" value="F:ATP binding"/>
    <property type="evidence" value="ECO:0007669"/>
    <property type="project" value="UniProtKB-UniRule"/>
</dbReference>
<dbReference type="GO" id="GO:0004828">
    <property type="term" value="F:serine-tRNA ligase activity"/>
    <property type="evidence" value="ECO:0007669"/>
    <property type="project" value="UniProtKB-UniRule"/>
</dbReference>
<dbReference type="GO" id="GO:0016260">
    <property type="term" value="P:selenocysteine biosynthetic process"/>
    <property type="evidence" value="ECO:0007669"/>
    <property type="project" value="UniProtKB-UniRule"/>
</dbReference>
<dbReference type="GO" id="GO:0006434">
    <property type="term" value="P:seryl-tRNA aminoacylation"/>
    <property type="evidence" value="ECO:0007669"/>
    <property type="project" value="UniProtKB-UniRule"/>
</dbReference>
<dbReference type="FunFam" id="1.10.287.40:FF:000004">
    <property type="entry name" value="Serine--tRNA ligase"/>
    <property type="match status" value="1"/>
</dbReference>
<dbReference type="Gene3D" id="3.30.930.10">
    <property type="entry name" value="Bira Bifunctional Protein, Domain 2"/>
    <property type="match status" value="1"/>
</dbReference>
<dbReference type="Gene3D" id="1.10.287.40">
    <property type="entry name" value="Serine-tRNA synthetase, tRNA binding domain"/>
    <property type="match status" value="1"/>
</dbReference>
<dbReference type="HAMAP" id="MF_00176">
    <property type="entry name" value="Ser_tRNA_synth_type1"/>
    <property type="match status" value="1"/>
</dbReference>
<dbReference type="InterPro" id="IPR002314">
    <property type="entry name" value="aa-tRNA-synt_IIb"/>
</dbReference>
<dbReference type="InterPro" id="IPR006195">
    <property type="entry name" value="aa-tRNA-synth_II"/>
</dbReference>
<dbReference type="InterPro" id="IPR045864">
    <property type="entry name" value="aa-tRNA-synth_II/BPL/LPL"/>
</dbReference>
<dbReference type="InterPro" id="IPR002317">
    <property type="entry name" value="Ser-tRNA-ligase_type_1"/>
</dbReference>
<dbReference type="InterPro" id="IPR015866">
    <property type="entry name" value="Ser-tRNA-synth_1_N"/>
</dbReference>
<dbReference type="InterPro" id="IPR042103">
    <property type="entry name" value="SerRS_1_N_sf"/>
</dbReference>
<dbReference type="InterPro" id="IPR010978">
    <property type="entry name" value="tRNA-bd_arm"/>
</dbReference>
<dbReference type="NCBIfam" id="TIGR00414">
    <property type="entry name" value="serS"/>
    <property type="match status" value="1"/>
</dbReference>
<dbReference type="PANTHER" id="PTHR11778">
    <property type="entry name" value="SERYL-TRNA SYNTHETASE"/>
    <property type="match status" value="1"/>
</dbReference>
<dbReference type="Pfam" id="PF02403">
    <property type="entry name" value="Seryl_tRNA_N"/>
    <property type="match status" value="1"/>
</dbReference>
<dbReference type="Pfam" id="PF00587">
    <property type="entry name" value="tRNA-synt_2b"/>
    <property type="match status" value="1"/>
</dbReference>
<dbReference type="PIRSF" id="PIRSF001529">
    <property type="entry name" value="Ser-tRNA-synth_IIa"/>
    <property type="match status" value="1"/>
</dbReference>
<dbReference type="PRINTS" id="PR00981">
    <property type="entry name" value="TRNASYNTHSER"/>
</dbReference>
<dbReference type="SUPFAM" id="SSF55681">
    <property type="entry name" value="Class II aaRS and biotin synthetases"/>
    <property type="match status" value="1"/>
</dbReference>
<dbReference type="SUPFAM" id="SSF46589">
    <property type="entry name" value="tRNA-binding arm"/>
    <property type="match status" value="1"/>
</dbReference>
<dbReference type="PROSITE" id="PS50862">
    <property type="entry name" value="AA_TRNA_LIGASE_II"/>
    <property type="match status" value="1"/>
</dbReference>
<organism>
    <name type="scientific">Mycobacterium ulcerans (strain Agy99)</name>
    <dbReference type="NCBI Taxonomy" id="362242"/>
    <lineage>
        <taxon>Bacteria</taxon>
        <taxon>Bacillati</taxon>
        <taxon>Actinomycetota</taxon>
        <taxon>Actinomycetes</taxon>
        <taxon>Mycobacteriales</taxon>
        <taxon>Mycobacteriaceae</taxon>
        <taxon>Mycobacterium</taxon>
        <taxon>Mycobacterium ulcerans group</taxon>
    </lineage>
</organism>
<evidence type="ECO:0000255" key="1">
    <source>
        <dbReference type="HAMAP-Rule" id="MF_00176"/>
    </source>
</evidence>
<evidence type="ECO:0000256" key="2">
    <source>
        <dbReference type="SAM" id="MobiDB-lite"/>
    </source>
</evidence>
<reference key="1">
    <citation type="journal article" date="2007" name="Genome Res.">
        <title>Reductive evolution and niche adaptation inferred from the genome of Mycobacterium ulcerans, the causative agent of Buruli ulcer.</title>
        <authorList>
            <person name="Stinear T.P."/>
            <person name="Seemann T."/>
            <person name="Pidot S."/>
            <person name="Frigui W."/>
            <person name="Reysset G."/>
            <person name="Garnier T."/>
            <person name="Meurice G."/>
            <person name="Simon D."/>
            <person name="Bouchier C."/>
            <person name="Ma L."/>
            <person name="Tichit M."/>
            <person name="Porter J.L."/>
            <person name="Ryan J."/>
            <person name="Johnson P.D.R."/>
            <person name="Davies J.K."/>
            <person name="Jenkin G.A."/>
            <person name="Small P.L.C."/>
            <person name="Jones L.M."/>
            <person name="Tekaia F."/>
            <person name="Laval F."/>
            <person name="Daffe M."/>
            <person name="Parkhill J."/>
            <person name="Cole S.T."/>
        </authorList>
    </citation>
    <scope>NUCLEOTIDE SEQUENCE [LARGE SCALE GENOMIC DNA]</scope>
    <source>
        <strain>Agy99</strain>
    </source>
</reference>
<sequence>MIDLKLLREDPDVVRRSQLSRGEDPALVDALLTADTARRTAISTADSLRAEQKAASKSVGGASPEERPALLQRAKDLAEQVKAAEATQSETETAFTAAHMAIPNVILDGVPAGGEDDYAVLDVVGEPRALDNPKDHLELGESLGLIDMARGAKVAGSRFYFLTGQGALLQLGLLQLALRLAVDNGFIPMIPPVLVRPEVMAGTGFLGAHADEVYRLEADDLYLVGTSEVPMAGYHADEIVDLSEGPLRYAGWSSCFRREAGSYGKDTRGIIRVHQFDKVEGFVYCAPADAEAEHQRLLAWQREMLAQIEVPYRVIDVAAGDLGASAARKFDCEAWVPTQGTYRELTSTSNCTTFQARRLATRYRDANGKPQIAATLNGTLGTTRWLVSILENHQQPDGSARVPAALVGFVGTEVLEPKG</sequence>
<gene>
    <name evidence="1" type="primary">serS</name>
    <name type="ordered locus">MUL_5006</name>
</gene>
<accession>A0PX13</accession>
<comment type="function">
    <text evidence="1">Catalyzes the attachment of serine to tRNA(Ser). Is also able to aminoacylate tRNA(Sec) with serine, to form the misacylated tRNA L-seryl-tRNA(Sec), which will be further converted into selenocysteinyl-tRNA(Sec).</text>
</comment>
<comment type="catalytic activity">
    <reaction evidence="1">
        <text>tRNA(Ser) + L-serine + ATP = L-seryl-tRNA(Ser) + AMP + diphosphate + H(+)</text>
        <dbReference type="Rhea" id="RHEA:12292"/>
        <dbReference type="Rhea" id="RHEA-COMP:9669"/>
        <dbReference type="Rhea" id="RHEA-COMP:9703"/>
        <dbReference type="ChEBI" id="CHEBI:15378"/>
        <dbReference type="ChEBI" id="CHEBI:30616"/>
        <dbReference type="ChEBI" id="CHEBI:33019"/>
        <dbReference type="ChEBI" id="CHEBI:33384"/>
        <dbReference type="ChEBI" id="CHEBI:78442"/>
        <dbReference type="ChEBI" id="CHEBI:78533"/>
        <dbReference type="ChEBI" id="CHEBI:456215"/>
        <dbReference type="EC" id="6.1.1.11"/>
    </reaction>
</comment>
<comment type="catalytic activity">
    <reaction evidence="1">
        <text>tRNA(Sec) + L-serine + ATP = L-seryl-tRNA(Sec) + AMP + diphosphate + H(+)</text>
        <dbReference type="Rhea" id="RHEA:42580"/>
        <dbReference type="Rhea" id="RHEA-COMP:9742"/>
        <dbReference type="Rhea" id="RHEA-COMP:10128"/>
        <dbReference type="ChEBI" id="CHEBI:15378"/>
        <dbReference type="ChEBI" id="CHEBI:30616"/>
        <dbReference type="ChEBI" id="CHEBI:33019"/>
        <dbReference type="ChEBI" id="CHEBI:33384"/>
        <dbReference type="ChEBI" id="CHEBI:78442"/>
        <dbReference type="ChEBI" id="CHEBI:78533"/>
        <dbReference type="ChEBI" id="CHEBI:456215"/>
        <dbReference type="EC" id="6.1.1.11"/>
    </reaction>
</comment>
<comment type="pathway">
    <text evidence="1">Aminoacyl-tRNA biosynthesis; selenocysteinyl-tRNA(Sec) biosynthesis; L-seryl-tRNA(Sec) from L-serine and tRNA(Sec): step 1/1.</text>
</comment>
<comment type="subunit">
    <text evidence="1">Homodimer. The tRNA molecule binds across the dimer.</text>
</comment>
<comment type="subcellular location">
    <subcellularLocation>
        <location evidence="1">Cytoplasm</location>
    </subcellularLocation>
</comment>
<comment type="domain">
    <text evidence="1">Consists of two distinct domains, a catalytic core and a N-terminal extension that is involved in tRNA binding.</text>
</comment>
<comment type="similarity">
    <text evidence="1">Belongs to the class-II aminoacyl-tRNA synthetase family. Type-1 seryl-tRNA synthetase subfamily.</text>
</comment>
<name>SYS_MYCUA</name>
<proteinExistence type="inferred from homology"/>
<keyword id="KW-0030">Aminoacyl-tRNA synthetase</keyword>
<keyword id="KW-0067">ATP-binding</keyword>
<keyword id="KW-0963">Cytoplasm</keyword>
<keyword id="KW-0436">Ligase</keyword>
<keyword id="KW-0547">Nucleotide-binding</keyword>
<keyword id="KW-0648">Protein biosynthesis</keyword>
<protein>
    <recommendedName>
        <fullName evidence="1">Serine--tRNA ligase</fullName>
        <ecNumber evidence="1">6.1.1.11</ecNumber>
    </recommendedName>
    <alternativeName>
        <fullName evidence="1">Seryl-tRNA synthetase</fullName>
        <shortName evidence="1">SerRS</shortName>
    </alternativeName>
    <alternativeName>
        <fullName evidence="1">Seryl-tRNA(Ser/Sec) synthetase</fullName>
    </alternativeName>
</protein>